<keyword id="KW-0456">Lyase</keyword>
<keyword id="KW-0501">Molybdenum cofactor biosynthesis</keyword>
<reference key="1">
    <citation type="journal article" date="2003" name="Mol. Microbiol.">
        <title>An integrated analysis of the genome of the hyperthermophilic archaeon Pyrococcus abyssi.</title>
        <authorList>
            <person name="Cohen G.N."/>
            <person name="Barbe V."/>
            <person name="Flament D."/>
            <person name="Galperin M."/>
            <person name="Heilig R."/>
            <person name="Lecompte O."/>
            <person name="Poch O."/>
            <person name="Prieur D."/>
            <person name="Querellou J."/>
            <person name="Ripp R."/>
            <person name="Thierry J.-C."/>
            <person name="Van der Oost J."/>
            <person name="Weissenbach J."/>
            <person name="Zivanovic Y."/>
            <person name="Forterre P."/>
        </authorList>
    </citation>
    <scope>NUCLEOTIDE SEQUENCE [LARGE SCALE GENOMIC DNA]</scope>
    <source>
        <strain>GE5 / Orsay</strain>
    </source>
</reference>
<reference key="2">
    <citation type="journal article" date="2012" name="Curr. Microbiol.">
        <title>Re-annotation of two hyperthermophilic archaea Pyrococcus abyssi GE5 and Pyrococcus furiosus DSM 3638.</title>
        <authorList>
            <person name="Gao J."/>
            <person name="Wang J."/>
        </authorList>
    </citation>
    <scope>GENOME REANNOTATION</scope>
    <source>
        <strain>GE5 / Orsay</strain>
    </source>
</reference>
<accession>Q9V1Q7</accession>
<accession>G8ZI04</accession>
<feature type="chain" id="PRO_0000097858" description="Probable cyclic pyranopterin monophosphate synthase">
    <location>
        <begin position="1"/>
        <end position="159"/>
    </location>
</feature>
<feature type="active site" evidence="1">
    <location>
        <position position="126"/>
    </location>
</feature>
<feature type="binding site" evidence="1">
    <location>
        <begin position="75"/>
        <end position="77"/>
    </location>
    <ligand>
        <name>substrate</name>
    </ligand>
</feature>
<feature type="binding site" evidence="1">
    <location>
        <begin position="111"/>
        <end position="112"/>
    </location>
    <ligand>
        <name>substrate</name>
    </ligand>
</feature>
<dbReference type="EC" id="4.6.1.17" evidence="1"/>
<dbReference type="EMBL" id="AJ248284">
    <property type="protein sequence ID" value="CAB49292.1"/>
    <property type="molecule type" value="Genomic_DNA"/>
</dbReference>
<dbReference type="EMBL" id="HE613800">
    <property type="protein sequence ID" value="CCE69747.1"/>
    <property type="molecule type" value="Genomic_DNA"/>
</dbReference>
<dbReference type="PIR" id="E75151">
    <property type="entry name" value="E75151"/>
</dbReference>
<dbReference type="RefSeq" id="WP_010867492.1">
    <property type="nucleotide sequence ID" value="NC_000868.1"/>
</dbReference>
<dbReference type="SMR" id="Q9V1Q7"/>
<dbReference type="STRING" id="272844.PAB2103"/>
<dbReference type="KEGG" id="pab:PAB2103"/>
<dbReference type="PATRIC" id="fig|272844.11.peg.391"/>
<dbReference type="eggNOG" id="arCOG01530">
    <property type="taxonomic scope" value="Archaea"/>
</dbReference>
<dbReference type="HOGENOM" id="CLU_074693_1_2_2"/>
<dbReference type="OrthoDB" id="10067at2157"/>
<dbReference type="PhylomeDB" id="Q9V1Q7"/>
<dbReference type="UniPathway" id="UPA00344"/>
<dbReference type="Proteomes" id="UP000000810">
    <property type="component" value="Chromosome"/>
</dbReference>
<dbReference type="Proteomes" id="UP000009139">
    <property type="component" value="Chromosome"/>
</dbReference>
<dbReference type="GO" id="GO:0061799">
    <property type="term" value="F:cyclic pyranopterin monophosphate synthase activity"/>
    <property type="evidence" value="ECO:0007669"/>
    <property type="project" value="UniProtKB-UniRule"/>
</dbReference>
<dbReference type="GO" id="GO:0061798">
    <property type="term" value="F:GTP 3',8'-cyclase activity"/>
    <property type="evidence" value="ECO:0007669"/>
    <property type="project" value="TreeGrafter"/>
</dbReference>
<dbReference type="GO" id="GO:0006777">
    <property type="term" value="P:Mo-molybdopterin cofactor biosynthetic process"/>
    <property type="evidence" value="ECO:0007669"/>
    <property type="project" value="UniProtKB-UniRule"/>
</dbReference>
<dbReference type="CDD" id="cd01419">
    <property type="entry name" value="MoaC_A"/>
    <property type="match status" value="1"/>
</dbReference>
<dbReference type="Gene3D" id="3.30.70.640">
    <property type="entry name" value="Molybdopterin cofactor biosynthesis C (MoaC) domain"/>
    <property type="match status" value="1"/>
</dbReference>
<dbReference type="HAMAP" id="MF_01224_A">
    <property type="entry name" value="MoaC_A"/>
    <property type="match status" value="1"/>
</dbReference>
<dbReference type="InterPro" id="IPR023047">
    <property type="entry name" value="Mo_CF_biosynth-C_arc"/>
</dbReference>
<dbReference type="InterPro" id="IPR023045">
    <property type="entry name" value="MoaC"/>
</dbReference>
<dbReference type="InterPro" id="IPR036522">
    <property type="entry name" value="MoaC_sf"/>
</dbReference>
<dbReference type="InterPro" id="IPR050105">
    <property type="entry name" value="MoCo_biosynth_MoaA/MoaC"/>
</dbReference>
<dbReference type="InterPro" id="IPR002820">
    <property type="entry name" value="Mopterin_CF_biosynth-C_dom"/>
</dbReference>
<dbReference type="NCBIfam" id="TIGR00581">
    <property type="entry name" value="moaC"/>
    <property type="match status" value="1"/>
</dbReference>
<dbReference type="NCBIfam" id="NF006870">
    <property type="entry name" value="PRK09364.1"/>
    <property type="match status" value="1"/>
</dbReference>
<dbReference type="NCBIfam" id="NF008999">
    <property type="entry name" value="PRK12343.1"/>
    <property type="match status" value="1"/>
</dbReference>
<dbReference type="PANTHER" id="PTHR22960:SF0">
    <property type="entry name" value="MOLYBDENUM COFACTOR BIOSYNTHESIS PROTEIN 1"/>
    <property type="match status" value="1"/>
</dbReference>
<dbReference type="PANTHER" id="PTHR22960">
    <property type="entry name" value="MOLYBDOPTERIN COFACTOR SYNTHESIS PROTEIN A"/>
    <property type="match status" value="1"/>
</dbReference>
<dbReference type="Pfam" id="PF01967">
    <property type="entry name" value="MoaC"/>
    <property type="match status" value="1"/>
</dbReference>
<dbReference type="SUPFAM" id="SSF55040">
    <property type="entry name" value="Molybdenum cofactor biosynthesis protein C, MoaC"/>
    <property type="match status" value="1"/>
</dbReference>
<organism>
    <name type="scientific">Pyrococcus abyssi (strain GE5 / Orsay)</name>
    <dbReference type="NCBI Taxonomy" id="272844"/>
    <lineage>
        <taxon>Archaea</taxon>
        <taxon>Methanobacteriati</taxon>
        <taxon>Methanobacteriota</taxon>
        <taxon>Thermococci</taxon>
        <taxon>Thermococcales</taxon>
        <taxon>Thermococcaceae</taxon>
        <taxon>Pyrococcus</taxon>
    </lineage>
</organism>
<evidence type="ECO:0000255" key="1">
    <source>
        <dbReference type="HAMAP-Rule" id="MF_01224"/>
    </source>
</evidence>
<proteinExistence type="inferred from homology"/>
<sequence>MVGRLTHVDEKGVKMVEIGHKDVVFRKAIAKGRIRLRPETIKLIREGKIEKGNVLATAQIAGILAVKKTPELIPLCHPIPLTGVDITFEFGEDYIEATCEVRAYYKTGVEMEALTGVTVALLTIWDMVKAVEKDEHGQYPYTRIEDVRVVEKIKTYSTQ</sequence>
<protein>
    <recommendedName>
        <fullName evidence="1">Probable cyclic pyranopterin monophosphate synthase</fullName>
        <ecNumber evidence="1">4.6.1.17</ecNumber>
    </recommendedName>
    <alternativeName>
        <fullName evidence="1">Molybdenum cofactor biosynthesis protein C</fullName>
    </alternativeName>
</protein>
<comment type="function">
    <text evidence="1">Catalyzes the conversion of (8S)-3',8-cyclo-7,8-dihydroguanosine 5'-triphosphate to cyclic pyranopterin monophosphate (cPMP).</text>
</comment>
<comment type="catalytic activity">
    <reaction evidence="1">
        <text>(8S)-3',8-cyclo-7,8-dihydroguanosine 5'-triphosphate = cyclic pyranopterin phosphate + diphosphate</text>
        <dbReference type="Rhea" id="RHEA:49580"/>
        <dbReference type="ChEBI" id="CHEBI:33019"/>
        <dbReference type="ChEBI" id="CHEBI:59648"/>
        <dbReference type="ChEBI" id="CHEBI:131766"/>
        <dbReference type="EC" id="4.6.1.17"/>
    </reaction>
</comment>
<comment type="pathway">
    <text evidence="1">Cofactor biosynthesis; molybdopterin biosynthesis.</text>
</comment>
<comment type="subunit">
    <text evidence="1">Homohexamer; trimer of dimers.</text>
</comment>
<comment type="similarity">
    <text evidence="1">Belongs to the MoaC family.</text>
</comment>
<name>MOAC_PYRAB</name>
<gene>
    <name evidence="1" type="primary">moaC</name>
    <name type="ordered locus">PYRAB03700</name>
    <name type="ORF">PAB2103</name>
</gene>